<dbReference type="GO" id="GO:0005576">
    <property type="term" value="C:extracellular region"/>
    <property type="evidence" value="ECO:0007669"/>
    <property type="project" value="UniProtKB-SubCell"/>
</dbReference>
<dbReference type="GO" id="GO:0007218">
    <property type="term" value="P:neuropeptide signaling pathway"/>
    <property type="evidence" value="ECO:0007669"/>
    <property type="project" value="UniProtKB-KW"/>
</dbReference>
<dbReference type="InterPro" id="IPR013231">
    <property type="entry name" value="Periviscerokinin"/>
</dbReference>
<dbReference type="Pfam" id="PF08259">
    <property type="entry name" value="Periviscerokin"/>
    <property type="match status" value="1"/>
</dbReference>
<reference evidence="4" key="1">
    <citation type="journal article" date="2009" name="BMC Evol. Biol.">
        <title>A proteomic approach for studying insect phylogeny: CAPA peptides of ancient insect taxa (Dictyoptera, Blattoptera) as a test case.</title>
        <authorList>
            <person name="Roth S."/>
            <person name="Fromm B."/>
            <person name="Gaede G."/>
            <person name="Predel R."/>
        </authorList>
    </citation>
    <scope>PROTEIN SEQUENCE</scope>
    <scope>AMIDATION AT VAL-11</scope>
    <source>
        <tissue evidence="2">Abdominal perisympathetic organs</tissue>
    </source>
</reference>
<organism>
    <name type="scientific">Panesthia sp. (strain BF-2008)</name>
    <name type="common">Cockroach</name>
    <dbReference type="NCBI Taxonomy" id="521518"/>
    <lineage>
        <taxon>Eukaryota</taxon>
        <taxon>Metazoa</taxon>
        <taxon>Ecdysozoa</taxon>
        <taxon>Arthropoda</taxon>
        <taxon>Hexapoda</taxon>
        <taxon>Insecta</taxon>
        <taxon>Pterygota</taxon>
        <taxon>Neoptera</taxon>
        <taxon>Polyneoptera</taxon>
        <taxon>Dictyoptera</taxon>
        <taxon>Blattodea</taxon>
        <taxon>Blaberoidea</taxon>
        <taxon>Blaberidae</taxon>
        <taxon>Panesthiinae</taxon>
        <taxon>Panesthia</taxon>
    </lineage>
</organism>
<comment type="function">
    <text evidence="4">Mediates visceral muscle contractile activity (myotropic activity).</text>
</comment>
<comment type="subcellular location">
    <subcellularLocation>
        <location evidence="4">Secreted</location>
    </subcellularLocation>
</comment>
<comment type="similarity">
    <text evidence="1">Belongs to the periviscerokinin family.</text>
</comment>
<feature type="peptide" id="PRO_0000378843" description="Periviscerokinin-3" evidence="2">
    <location>
        <begin position="1"/>
        <end position="11"/>
    </location>
</feature>
<feature type="modified residue" description="Valine amide" evidence="2">
    <location>
        <position position="11"/>
    </location>
</feature>
<protein>
    <recommendedName>
        <fullName evidence="3">Periviscerokinin-3</fullName>
        <shortName evidence="3">PanS2-PVK-3</shortName>
    </recommendedName>
</protein>
<name>PVK3_PANSB</name>
<keyword id="KW-0027">Amidation</keyword>
<keyword id="KW-0903">Direct protein sequencing</keyword>
<keyword id="KW-0527">Neuropeptide</keyword>
<keyword id="KW-0964">Secreted</keyword>
<accession>P85689</accession>
<evidence type="ECO:0000255" key="1"/>
<evidence type="ECO:0000269" key="2">
    <source>
    </source>
</evidence>
<evidence type="ECO:0000303" key="3">
    <source>
    </source>
</evidence>
<evidence type="ECO:0000305" key="4"/>
<proteinExistence type="evidence at protein level"/>
<sequence length="11" mass="1147">GSSGMIPFPRV</sequence>